<name>RR16_SORBI</name>
<gene>
    <name evidence="1" type="primary">rps16</name>
</gene>
<proteinExistence type="inferred from homology"/>
<comment type="subcellular location">
    <subcellularLocation>
        <location>Plastid</location>
        <location>Chloroplast</location>
    </subcellularLocation>
</comment>
<comment type="similarity">
    <text evidence="1">Belongs to the bacterial ribosomal protein bS16 family.</text>
</comment>
<keyword id="KW-0150">Chloroplast</keyword>
<keyword id="KW-0934">Plastid</keyword>
<keyword id="KW-1185">Reference proteome</keyword>
<keyword id="KW-0687">Ribonucleoprotein</keyword>
<keyword id="KW-0689">Ribosomal protein</keyword>
<organism>
    <name type="scientific">Sorghum bicolor</name>
    <name type="common">Sorghum</name>
    <name type="synonym">Sorghum vulgare</name>
    <dbReference type="NCBI Taxonomy" id="4558"/>
    <lineage>
        <taxon>Eukaryota</taxon>
        <taxon>Viridiplantae</taxon>
        <taxon>Streptophyta</taxon>
        <taxon>Embryophyta</taxon>
        <taxon>Tracheophyta</taxon>
        <taxon>Spermatophyta</taxon>
        <taxon>Magnoliopsida</taxon>
        <taxon>Liliopsida</taxon>
        <taxon>Poales</taxon>
        <taxon>Poaceae</taxon>
        <taxon>PACMAD clade</taxon>
        <taxon>Panicoideae</taxon>
        <taxon>Andropogonodae</taxon>
        <taxon>Andropogoneae</taxon>
        <taxon>Sorghinae</taxon>
        <taxon>Sorghum</taxon>
    </lineage>
</organism>
<sequence length="85" mass="10090">MVKLRLKRCGRKQQAIYRIVAIDVRSRREGRDLRKVGFYDPIKNQTCLNVPAILYFLEKGAQPTRTVYDILRKAEFFKDKERTLS</sequence>
<dbReference type="EMBL" id="EF115542">
    <property type="protein sequence ID" value="ABK79478.1"/>
    <property type="molecule type" value="Genomic_DNA"/>
</dbReference>
<dbReference type="RefSeq" id="YP_899389.1">
    <property type="nucleotide sequence ID" value="NC_008602.1"/>
</dbReference>
<dbReference type="SMR" id="A1E9Q6"/>
<dbReference type="FunCoup" id="A1E9Q6">
    <property type="interactions" value="39"/>
</dbReference>
<dbReference type="STRING" id="4558.A1E9Q6"/>
<dbReference type="GeneID" id="4549140"/>
<dbReference type="KEGG" id="sbi:4549140"/>
<dbReference type="eggNOG" id="KOG3419">
    <property type="taxonomic scope" value="Eukaryota"/>
</dbReference>
<dbReference type="InParanoid" id="A1E9Q6"/>
<dbReference type="OrthoDB" id="407221at2759"/>
<dbReference type="Proteomes" id="UP000000768">
    <property type="component" value="Chloroplast"/>
</dbReference>
<dbReference type="ExpressionAtlas" id="A1E9Q6">
    <property type="expression patterns" value="baseline and differential"/>
</dbReference>
<dbReference type="GO" id="GO:0009507">
    <property type="term" value="C:chloroplast"/>
    <property type="evidence" value="ECO:0007669"/>
    <property type="project" value="UniProtKB-SubCell"/>
</dbReference>
<dbReference type="GO" id="GO:0015935">
    <property type="term" value="C:small ribosomal subunit"/>
    <property type="evidence" value="ECO:0000318"/>
    <property type="project" value="GO_Central"/>
</dbReference>
<dbReference type="GO" id="GO:0003735">
    <property type="term" value="F:structural constituent of ribosome"/>
    <property type="evidence" value="ECO:0000318"/>
    <property type="project" value="GO_Central"/>
</dbReference>
<dbReference type="GO" id="GO:0006412">
    <property type="term" value="P:translation"/>
    <property type="evidence" value="ECO:0007669"/>
    <property type="project" value="UniProtKB-UniRule"/>
</dbReference>
<dbReference type="FunFam" id="3.30.1320.10:FF:000003">
    <property type="entry name" value="30S ribosomal protein S16, chloroplastic"/>
    <property type="match status" value="1"/>
</dbReference>
<dbReference type="Gene3D" id="3.30.1320.10">
    <property type="match status" value="1"/>
</dbReference>
<dbReference type="HAMAP" id="MF_00385">
    <property type="entry name" value="Ribosomal_bS16"/>
    <property type="match status" value="1"/>
</dbReference>
<dbReference type="InterPro" id="IPR000307">
    <property type="entry name" value="Ribosomal_bS16"/>
</dbReference>
<dbReference type="InterPro" id="IPR020592">
    <property type="entry name" value="Ribosomal_bS16_CS"/>
</dbReference>
<dbReference type="InterPro" id="IPR023803">
    <property type="entry name" value="Ribosomal_bS16_dom_sf"/>
</dbReference>
<dbReference type="NCBIfam" id="TIGR00002">
    <property type="entry name" value="S16"/>
    <property type="match status" value="1"/>
</dbReference>
<dbReference type="PANTHER" id="PTHR12919">
    <property type="entry name" value="30S RIBOSOMAL PROTEIN S16"/>
    <property type="match status" value="1"/>
</dbReference>
<dbReference type="PANTHER" id="PTHR12919:SF20">
    <property type="entry name" value="SMALL RIBOSOMAL SUBUNIT PROTEIN BS16M"/>
    <property type="match status" value="1"/>
</dbReference>
<dbReference type="Pfam" id="PF00886">
    <property type="entry name" value="Ribosomal_S16"/>
    <property type="match status" value="1"/>
</dbReference>
<dbReference type="SUPFAM" id="SSF54565">
    <property type="entry name" value="Ribosomal protein S16"/>
    <property type="match status" value="1"/>
</dbReference>
<dbReference type="PROSITE" id="PS00732">
    <property type="entry name" value="RIBOSOMAL_S16"/>
    <property type="match status" value="1"/>
</dbReference>
<accession>A1E9Q6</accession>
<feature type="chain" id="PRO_0000276961" description="Small ribosomal subunit protein bS16c">
    <location>
        <begin position="1"/>
        <end position="85"/>
    </location>
</feature>
<reference key="1">
    <citation type="journal article" date="2007" name="Theor. Appl. Genet.">
        <title>Complete chloroplast genome sequences of Hordeum vulgare, Sorghum bicolor and Agrostis stolonifera, and comparative analyses with other grass genomes.</title>
        <authorList>
            <person name="Saski C."/>
            <person name="Lee S.-B."/>
            <person name="Fjellheim S."/>
            <person name="Guda C."/>
            <person name="Jansen R.K."/>
            <person name="Luo H."/>
            <person name="Tomkins J."/>
            <person name="Rognli O.A."/>
            <person name="Daniell H."/>
            <person name="Clarke J.L."/>
        </authorList>
    </citation>
    <scope>NUCLEOTIDE SEQUENCE [LARGE SCALE GENOMIC DNA]</scope>
    <source>
        <strain>cv. BTx623</strain>
    </source>
</reference>
<protein>
    <recommendedName>
        <fullName evidence="1">Small ribosomal subunit protein bS16c</fullName>
    </recommendedName>
    <alternativeName>
        <fullName evidence="2">30S ribosomal protein S16, chloroplastic</fullName>
    </alternativeName>
</protein>
<geneLocation type="chloroplast"/>
<evidence type="ECO:0000255" key="1">
    <source>
        <dbReference type="HAMAP-Rule" id="MF_00385"/>
    </source>
</evidence>
<evidence type="ECO:0000305" key="2"/>